<sequence length="588" mass="63851">MNNSINHKFHHISRTEYQELLAVSRGDAVADYIIDNVSILDLINGGEISGPIVIKGRYIAGVGAEYADAPALQRIDARGATAVPGFIDAHLHIESSMMTPVTFETATLPRGLTTVICDPHEIVNVMGEAGFAWFARCAEQARQNQYLQVSSCVPALEGCDVNGASFTLEQMLAWRDHPQVTGLAEMMDYPGVISGQNALLDKLDAFRHLTLDGHCPGLGGKELNAYIAAGIENCHESYQLEEGRRKLQLGMSLMIREGSAARNLNALAPLINEFNSPQCMLCTDDRNPWEIAHEGHIDALIRRLIEQHNVPLHVAYRVASWSTARHFGLNHLGLLAPGKQADIVLLSDARKVTVQQVLVKGEPIDAQTLQAEESARLAQSAPPYGNTIDRQPVSASDFALQFTPGKRYRVIEVIHNELITHSRSSVYSENGFDRDDVCFIAVLERYGQRLAPACGLLGGFGLNEGALAATVSHDSHNIVVIGRSAEEMALAVNQVIQDGGGLCVVRNGQVQSHLPLPIAGLMSTDTAQSLAEQIDALKAAARECGPLPDEPFIQMAFLSLPVIPALKLTSQGLFDGEKFAFTTLEFTE</sequence>
<proteinExistence type="inferred from homology"/>
<name>ADEC_ECO45</name>
<evidence type="ECO:0000255" key="1">
    <source>
        <dbReference type="HAMAP-Rule" id="MF_01518"/>
    </source>
</evidence>
<dbReference type="EC" id="3.5.4.2" evidence="1"/>
<dbReference type="EMBL" id="CU928161">
    <property type="protein sequence ID" value="CAR05297.1"/>
    <property type="molecule type" value="Genomic_DNA"/>
</dbReference>
<dbReference type="SMR" id="B7MFN5"/>
<dbReference type="KEGG" id="ecz:ECS88_4090"/>
<dbReference type="HOGENOM" id="CLU_027935_0_0_6"/>
<dbReference type="Proteomes" id="UP000000747">
    <property type="component" value="Chromosome"/>
</dbReference>
<dbReference type="GO" id="GO:0000034">
    <property type="term" value="F:adenine deaminase activity"/>
    <property type="evidence" value="ECO:0007669"/>
    <property type="project" value="UniProtKB-UniRule"/>
</dbReference>
<dbReference type="GO" id="GO:0006146">
    <property type="term" value="P:adenine catabolic process"/>
    <property type="evidence" value="ECO:0007669"/>
    <property type="project" value="InterPro"/>
</dbReference>
<dbReference type="CDD" id="cd01295">
    <property type="entry name" value="AdeC"/>
    <property type="match status" value="1"/>
</dbReference>
<dbReference type="FunFam" id="3.20.20.140:FF:000016">
    <property type="entry name" value="Adenine deaminase"/>
    <property type="match status" value="1"/>
</dbReference>
<dbReference type="Gene3D" id="3.20.20.140">
    <property type="entry name" value="Metal-dependent hydrolases"/>
    <property type="match status" value="1"/>
</dbReference>
<dbReference type="Gene3D" id="2.30.40.10">
    <property type="entry name" value="Urease, subunit C, domain 1"/>
    <property type="match status" value="1"/>
</dbReference>
<dbReference type="HAMAP" id="MF_01518">
    <property type="entry name" value="Adenine_deamin"/>
    <property type="match status" value="1"/>
</dbReference>
<dbReference type="InterPro" id="IPR006679">
    <property type="entry name" value="Adenine_deam"/>
</dbReference>
<dbReference type="InterPro" id="IPR026912">
    <property type="entry name" value="Adenine_deam_C"/>
</dbReference>
<dbReference type="InterPro" id="IPR006680">
    <property type="entry name" value="Amidohydro-rel"/>
</dbReference>
<dbReference type="InterPro" id="IPR011059">
    <property type="entry name" value="Metal-dep_hydrolase_composite"/>
</dbReference>
<dbReference type="InterPro" id="IPR032466">
    <property type="entry name" value="Metal_Hydrolase"/>
</dbReference>
<dbReference type="NCBIfam" id="TIGR01178">
    <property type="entry name" value="ade"/>
    <property type="match status" value="1"/>
</dbReference>
<dbReference type="NCBIfam" id="NF007457">
    <property type="entry name" value="PRK10027.1"/>
    <property type="match status" value="1"/>
</dbReference>
<dbReference type="PANTHER" id="PTHR11113:SF2">
    <property type="entry name" value="ADENINE DEAMINASE"/>
    <property type="match status" value="1"/>
</dbReference>
<dbReference type="PANTHER" id="PTHR11113">
    <property type="entry name" value="N-ACETYLGLUCOSAMINE-6-PHOSPHATE DEACETYLASE"/>
    <property type="match status" value="1"/>
</dbReference>
<dbReference type="Pfam" id="PF13382">
    <property type="entry name" value="Adenine_deam_C"/>
    <property type="match status" value="1"/>
</dbReference>
<dbReference type="Pfam" id="PF01979">
    <property type="entry name" value="Amidohydro_1"/>
    <property type="match status" value="1"/>
</dbReference>
<dbReference type="SUPFAM" id="SSF51338">
    <property type="entry name" value="Composite domain of metallo-dependent hydrolases"/>
    <property type="match status" value="1"/>
</dbReference>
<dbReference type="SUPFAM" id="SSF51556">
    <property type="entry name" value="Metallo-dependent hydrolases"/>
    <property type="match status" value="1"/>
</dbReference>
<feature type="chain" id="PRO_1000146232" description="Adenine deaminase">
    <location>
        <begin position="1"/>
        <end position="588"/>
    </location>
</feature>
<organism>
    <name type="scientific">Escherichia coli O45:K1 (strain S88 / ExPEC)</name>
    <dbReference type="NCBI Taxonomy" id="585035"/>
    <lineage>
        <taxon>Bacteria</taxon>
        <taxon>Pseudomonadati</taxon>
        <taxon>Pseudomonadota</taxon>
        <taxon>Gammaproteobacteria</taxon>
        <taxon>Enterobacterales</taxon>
        <taxon>Enterobacteriaceae</taxon>
        <taxon>Escherichia</taxon>
    </lineage>
</organism>
<protein>
    <recommendedName>
        <fullName evidence="1">Adenine deaminase</fullName>
        <shortName evidence="1">Adenase</shortName>
        <shortName evidence="1">Adenine aminase</shortName>
        <ecNumber evidence="1">3.5.4.2</ecNumber>
    </recommendedName>
</protein>
<accession>B7MFN5</accession>
<keyword id="KW-0378">Hydrolase</keyword>
<keyword id="KW-0464">Manganese</keyword>
<keyword id="KW-1185">Reference proteome</keyword>
<comment type="catalytic activity">
    <reaction evidence="1">
        <text>adenine + H2O + H(+) = hypoxanthine + NH4(+)</text>
        <dbReference type="Rhea" id="RHEA:23688"/>
        <dbReference type="ChEBI" id="CHEBI:15377"/>
        <dbReference type="ChEBI" id="CHEBI:15378"/>
        <dbReference type="ChEBI" id="CHEBI:16708"/>
        <dbReference type="ChEBI" id="CHEBI:17368"/>
        <dbReference type="ChEBI" id="CHEBI:28938"/>
        <dbReference type="EC" id="3.5.4.2"/>
    </reaction>
</comment>
<comment type="cofactor">
    <cofactor evidence="1">
        <name>Mn(2+)</name>
        <dbReference type="ChEBI" id="CHEBI:29035"/>
    </cofactor>
</comment>
<comment type="subunit">
    <text evidence="1">Homodimer.</text>
</comment>
<comment type="similarity">
    <text evidence="1">Belongs to the metallo-dependent hydrolases superfamily. Adenine deaminase family.</text>
</comment>
<reference key="1">
    <citation type="journal article" date="2009" name="PLoS Genet.">
        <title>Organised genome dynamics in the Escherichia coli species results in highly diverse adaptive paths.</title>
        <authorList>
            <person name="Touchon M."/>
            <person name="Hoede C."/>
            <person name="Tenaillon O."/>
            <person name="Barbe V."/>
            <person name="Baeriswyl S."/>
            <person name="Bidet P."/>
            <person name="Bingen E."/>
            <person name="Bonacorsi S."/>
            <person name="Bouchier C."/>
            <person name="Bouvet O."/>
            <person name="Calteau A."/>
            <person name="Chiapello H."/>
            <person name="Clermont O."/>
            <person name="Cruveiller S."/>
            <person name="Danchin A."/>
            <person name="Diard M."/>
            <person name="Dossat C."/>
            <person name="Karoui M.E."/>
            <person name="Frapy E."/>
            <person name="Garry L."/>
            <person name="Ghigo J.M."/>
            <person name="Gilles A.M."/>
            <person name="Johnson J."/>
            <person name="Le Bouguenec C."/>
            <person name="Lescat M."/>
            <person name="Mangenot S."/>
            <person name="Martinez-Jehanne V."/>
            <person name="Matic I."/>
            <person name="Nassif X."/>
            <person name="Oztas S."/>
            <person name="Petit M.A."/>
            <person name="Pichon C."/>
            <person name="Rouy Z."/>
            <person name="Ruf C.S."/>
            <person name="Schneider D."/>
            <person name="Tourret J."/>
            <person name="Vacherie B."/>
            <person name="Vallenet D."/>
            <person name="Medigue C."/>
            <person name="Rocha E.P.C."/>
            <person name="Denamur E."/>
        </authorList>
    </citation>
    <scope>NUCLEOTIDE SEQUENCE [LARGE SCALE GENOMIC DNA]</scope>
    <source>
        <strain>S88 / ExPEC</strain>
    </source>
</reference>
<gene>
    <name evidence="1" type="primary">ade</name>
    <name type="ordered locus">ECS88_4090</name>
</gene>